<name>RK21_THAPS</name>
<gene>
    <name evidence="1" type="primary">rpl21</name>
</gene>
<sequence>MKYAIVEISGRQFWIETGKYYDLNRIPTELEKEIILNRVLLANNDGEILIGKPYLDSVKVKGKILEHLRGRKTIVYKMRPKKKTRKKQGHRQDLTRVLIEEIKIN</sequence>
<evidence type="ECO:0000255" key="1">
    <source>
        <dbReference type="HAMAP-Rule" id="MF_01363"/>
    </source>
</evidence>
<evidence type="ECO:0000305" key="2"/>
<proteinExistence type="inferred from homology"/>
<dbReference type="EMBL" id="EF067921">
    <property type="protein sequence ID" value="ABK20791.1"/>
    <property type="molecule type" value="Genomic_DNA"/>
</dbReference>
<dbReference type="EMBL" id="EF067921">
    <property type="protein sequence ID" value="ABK20849.1"/>
    <property type="molecule type" value="Genomic_DNA"/>
</dbReference>
<dbReference type="RefSeq" id="YP_874568.1">
    <property type="nucleotide sequence ID" value="NC_008589.1"/>
</dbReference>
<dbReference type="RefSeq" id="YP_874626.1">
    <property type="nucleotide sequence ID" value="NC_008589.1"/>
</dbReference>
<dbReference type="SMR" id="A0T0V6"/>
<dbReference type="STRING" id="35128.A0T0V6"/>
<dbReference type="GeneID" id="4524828"/>
<dbReference type="GeneID" id="4524885"/>
<dbReference type="InParanoid" id="A0T0V6"/>
<dbReference type="GO" id="GO:0009507">
    <property type="term" value="C:chloroplast"/>
    <property type="evidence" value="ECO:0007669"/>
    <property type="project" value="UniProtKB-SubCell"/>
</dbReference>
<dbReference type="GO" id="GO:0005762">
    <property type="term" value="C:mitochondrial large ribosomal subunit"/>
    <property type="evidence" value="ECO:0000318"/>
    <property type="project" value="GO_Central"/>
</dbReference>
<dbReference type="GO" id="GO:0019843">
    <property type="term" value="F:rRNA binding"/>
    <property type="evidence" value="ECO:0007669"/>
    <property type="project" value="UniProtKB-UniRule"/>
</dbReference>
<dbReference type="GO" id="GO:0003735">
    <property type="term" value="F:structural constituent of ribosome"/>
    <property type="evidence" value="ECO:0000318"/>
    <property type="project" value="GO_Central"/>
</dbReference>
<dbReference type="GO" id="GO:0006412">
    <property type="term" value="P:translation"/>
    <property type="evidence" value="ECO:0007669"/>
    <property type="project" value="UniProtKB-UniRule"/>
</dbReference>
<dbReference type="HAMAP" id="MF_01363">
    <property type="entry name" value="Ribosomal_bL21"/>
    <property type="match status" value="1"/>
</dbReference>
<dbReference type="InterPro" id="IPR028909">
    <property type="entry name" value="bL21-like"/>
</dbReference>
<dbReference type="InterPro" id="IPR036164">
    <property type="entry name" value="bL21-like_sf"/>
</dbReference>
<dbReference type="InterPro" id="IPR001787">
    <property type="entry name" value="Ribosomal_bL21"/>
</dbReference>
<dbReference type="InterPro" id="IPR018258">
    <property type="entry name" value="Ribosomal_bL21_CS"/>
</dbReference>
<dbReference type="NCBIfam" id="TIGR00061">
    <property type="entry name" value="L21"/>
    <property type="match status" value="1"/>
</dbReference>
<dbReference type="PANTHER" id="PTHR21349">
    <property type="entry name" value="50S RIBOSOMAL PROTEIN L21"/>
    <property type="match status" value="1"/>
</dbReference>
<dbReference type="PANTHER" id="PTHR21349:SF7">
    <property type="entry name" value="LARGE RIBOSOMAL SUBUNIT PROTEIN BL21C"/>
    <property type="match status" value="1"/>
</dbReference>
<dbReference type="Pfam" id="PF00829">
    <property type="entry name" value="Ribosomal_L21p"/>
    <property type="match status" value="1"/>
</dbReference>
<dbReference type="SUPFAM" id="SSF141091">
    <property type="entry name" value="L21p-like"/>
    <property type="match status" value="1"/>
</dbReference>
<dbReference type="PROSITE" id="PS01169">
    <property type="entry name" value="RIBOSOMAL_L21"/>
    <property type="match status" value="1"/>
</dbReference>
<protein>
    <recommendedName>
        <fullName evidence="1">Large ribosomal subunit protein bL21c</fullName>
    </recommendedName>
    <alternativeName>
        <fullName evidence="2">50S ribosomal protein L21, chloroplastic</fullName>
    </alternativeName>
</protein>
<accession>A0T0V6</accession>
<feature type="chain" id="PRO_0000276439" description="Large ribosomal subunit protein bL21c">
    <location>
        <begin position="1"/>
        <end position="105"/>
    </location>
</feature>
<comment type="function">
    <text evidence="1">This protein binds to 23S rRNA.</text>
</comment>
<comment type="subunit">
    <text evidence="1">Part of the 50S ribosomal subunit.</text>
</comment>
<comment type="subcellular location">
    <subcellularLocation>
        <location>Plastid</location>
        <location>Chloroplast</location>
    </subcellularLocation>
</comment>
<comment type="similarity">
    <text evidence="1">Belongs to the bacterial ribosomal protein bL21 family.</text>
</comment>
<geneLocation type="chloroplast"/>
<keyword id="KW-0150">Chloroplast</keyword>
<keyword id="KW-0934">Plastid</keyword>
<keyword id="KW-0687">Ribonucleoprotein</keyword>
<keyword id="KW-0689">Ribosomal protein</keyword>
<keyword id="KW-0694">RNA-binding</keyword>
<keyword id="KW-0699">rRNA-binding</keyword>
<organism>
    <name type="scientific">Thalassiosira pseudonana</name>
    <name type="common">Marine diatom</name>
    <name type="synonym">Cyclotella nana</name>
    <dbReference type="NCBI Taxonomy" id="35128"/>
    <lineage>
        <taxon>Eukaryota</taxon>
        <taxon>Sar</taxon>
        <taxon>Stramenopiles</taxon>
        <taxon>Ochrophyta</taxon>
        <taxon>Bacillariophyta</taxon>
        <taxon>Coscinodiscophyceae</taxon>
        <taxon>Thalassiosirophycidae</taxon>
        <taxon>Thalassiosirales</taxon>
        <taxon>Thalassiosiraceae</taxon>
        <taxon>Thalassiosira</taxon>
    </lineage>
</organism>
<reference key="1">
    <citation type="journal article" date="2007" name="Mol. Genet. Genomics">
        <title>Chloroplast genomes of the diatoms Phaeodactylum tricornutum and Thalassiosira pseudonana: comparison with other plastid genomes of the red lineage.</title>
        <authorList>
            <person name="Oudot-Le Secq M.-P."/>
            <person name="Grimwood J."/>
            <person name="Shapiro H."/>
            <person name="Armbrust E.V."/>
            <person name="Bowler C."/>
            <person name="Green B.R."/>
        </authorList>
    </citation>
    <scope>NUCLEOTIDE SEQUENCE [LARGE SCALE GENOMIC DNA]</scope>
    <source>
        <strain>CCMP1335 / NEPCC58 / CCAP 1085/12</strain>
    </source>
</reference>